<reference key="1">
    <citation type="submission" date="2000-02" db="EMBL/GenBank/DDBJ databases">
        <title>Ipomoea batatas polyphenol oxidase I mRNA.</title>
        <authorList>
            <person name="Hashimoto H."/>
            <person name="Nozue M."/>
            <person name="Tanaka I."/>
        </authorList>
    </citation>
    <scope>NUCLEOTIDE SEQUENCE [MRNA]</scope>
</reference>
<reference key="2">
    <citation type="submission" date="1999-08" db="EMBL/GenBank/DDBJ databases">
        <title>Sequence and structural implications of two isozymes of Ipomoea batatas catechol oxidase differing in catalase activity.</title>
        <authorList>
            <person name="Gerdemann C."/>
            <person name="Eicken C."/>
            <person name="Magrini A."/>
            <person name="Meier H.E."/>
            <person name="Spener F."/>
            <person name="Krebs B."/>
        </authorList>
    </citation>
    <scope>NUCLEOTIDE SEQUENCE [MRNA] OF 89-588</scope>
    <source>
        <strain>cv. Bushbuck</strain>
        <tissue>Root</tissue>
    </source>
</reference>
<reference key="3">
    <citation type="submission" date="2001-04" db="EMBL/GenBank/DDBJ databases">
        <title>Sequencing and cloning of genomic DNA encoding two isozymes of Ipomoea batatas catechol oxidase.</title>
        <authorList>
            <person name="Greving J."/>
            <person name="Gerdemann C."/>
            <person name="Spener F."/>
            <person name="Krebs B."/>
        </authorList>
    </citation>
    <scope>NUCLEOTIDE SEQUENCE [GENOMIC DNA] OF 89-588</scope>
    <source>
        <strain>cv. Bushbuck</strain>
    </source>
</reference>
<dbReference type="EC" id="1.10.3.1"/>
<dbReference type="EMBL" id="AB038994">
    <property type="protein sequence ID" value="BAA92317.1"/>
    <property type="molecule type" value="mRNA"/>
</dbReference>
<dbReference type="EMBL" id="AJ245880">
    <property type="protein sequence ID" value="CAC29040.1"/>
    <property type="molecule type" value="mRNA"/>
</dbReference>
<dbReference type="EMBL" id="AJ309176">
    <property type="protein sequence ID" value="CAC83610.1"/>
    <property type="molecule type" value="Genomic_DNA"/>
</dbReference>
<dbReference type="SMR" id="Q9MB14"/>
<dbReference type="GO" id="GO:0009543">
    <property type="term" value="C:chloroplast thylakoid lumen"/>
    <property type="evidence" value="ECO:0007669"/>
    <property type="project" value="UniProtKB-SubCell"/>
</dbReference>
<dbReference type="GO" id="GO:0004097">
    <property type="term" value="F:catechol oxidase activity"/>
    <property type="evidence" value="ECO:0007669"/>
    <property type="project" value="UniProtKB-EC"/>
</dbReference>
<dbReference type="GO" id="GO:0046872">
    <property type="term" value="F:metal ion binding"/>
    <property type="evidence" value="ECO:0007669"/>
    <property type="project" value="UniProtKB-KW"/>
</dbReference>
<dbReference type="GO" id="GO:0046148">
    <property type="term" value="P:pigment biosynthetic process"/>
    <property type="evidence" value="ECO:0007669"/>
    <property type="project" value="InterPro"/>
</dbReference>
<dbReference type="FunFam" id="1.10.1280.10:FF:000007">
    <property type="entry name" value="Polyphenol oxidase, chloroplastic"/>
    <property type="match status" value="1"/>
</dbReference>
<dbReference type="Gene3D" id="1.10.1280.10">
    <property type="entry name" value="Di-copper center containing domain from catechol oxidase"/>
    <property type="match status" value="1"/>
</dbReference>
<dbReference type="InterPro" id="IPR008922">
    <property type="entry name" value="Di-copper_centre_dom_sf"/>
</dbReference>
<dbReference type="InterPro" id="IPR016213">
    <property type="entry name" value="Polyphenol_oxidase"/>
</dbReference>
<dbReference type="InterPro" id="IPR022740">
    <property type="entry name" value="Polyphenol_oxidase_C"/>
</dbReference>
<dbReference type="InterPro" id="IPR022739">
    <property type="entry name" value="Polyphenol_oxidase_cen"/>
</dbReference>
<dbReference type="InterPro" id="IPR050316">
    <property type="entry name" value="Tyrosinase/Hemocyanin"/>
</dbReference>
<dbReference type="InterPro" id="IPR002227">
    <property type="entry name" value="Tyrosinase_Cu-bd"/>
</dbReference>
<dbReference type="PANTHER" id="PTHR11474:SF95">
    <property type="entry name" value="POLYPHENOL OXIDASE, CHLOROPLASTIC-LIKE"/>
    <property type="match status" value="1"/>
</dbReference>
<dbReference type="PANTHER" id="PTHR11474">
    <property type="entry name" value="TYROSINASE FAMILY MEMBER"/>
    <property type="match status" value="1"/>
</dbReference>
<dbReference type="Pfam" id="PF12142">
    <property type="entry name" value="PPO1_DWL"/>
    <property type="match status" value="1"/>
</dbReference>
<dbReference type="Pfam" id="PF12143">
    <property type="entry name" value="PPO1_KFDV"/>
    <property type="match status" value="1"/>
</dbReference>
<dbReference type="Pfam" id="PF00264">
    <property type="entry name" value="Tyrosinase"/>
    <property type="match status" value="1"/>
</dbReference>
<dbReference type="PIRSF" id="PIRSF000290">
    <property type="entry name" value="PPO_plant"/>
    <property type="match status" value="1"/>
</dbReference>
<dbReference type="PRINTS" id="PR00092">
    <property type="entry name" value="TYROSINASE"/>
</dbReference>
<dbReference type="SUPFAM" id="SSF48056">
    <property type="entry name" value="Di-copper centre-containing domain"/>
    <property type="match status" value="1"/>
</dbReference>
<dbReference type="PROSITE" id="PS00497">
    <property type="entry name" value="TYROSINASE_1"/>
    <property type="match status" value="1"/>
</dbReference>
<evidence type="ECO:0000250" key="1"/>
<evidence type="ECO:0000250" key="2">
    <source>
        <dbReference type="UniProtKB" id="Q9ZP19"/>
    </source>
</evidence>
<evidence type="ECO:0000255" key="3"/>
<evidence type="ECO:0000256" key="4">
    <source>
        <dbReference type="SAM" id="MobiDB-lite"/>
    </source>
</evidence>
<evidence type="ECO:0000305" key="5"/>
<comment type="function">
    <text evidence="1">Catalyzes the oxidation of mono- and o-diphenols to o-diquinones.</text>
</comment>
<comment type="catalytic activity">
    <reaction>
        <text>2 catechol + O2 = 2 1,2-benzoquinone + 2 H2O</text>
        <dbReference type="Rhea" id="RHEA:21632"/>
        <dbReference type="ChEBI" id="CHEBI:15377"/>
        <dbReference type="ChEBI" id="CHEBI:15379"/>
        <dbReference type="ChEBI" id="CHEBI:17253"/>
        <dbReference type="ChEBI" id="CHEBI:18135"/>
        <dbReference type="EC" id="1.10.3.1"/>
    </reaction>
</comment>
<comment type="cofactor">
    <cofactor evidence="2">
        <name>Cu(2+)</name>
        <dbReference type="ChEBI" id="CHEBI:29036"/>
    </cofactor>
    <text evidence="2">Binds 2 copper ions per subunit.</text>
</comment>
<comment type="subunit">
    <text evidence="1">Monomer.</text>
</comment>
<comment type="subcellular location">
    <subcellularLocation>
        <location evidence="1">Plastid</location>
        <location evidence="1">Chloroplast thylakoid lumen</location>
    </subcellularLocation>
</comment>
<comment type="similarity">
    <text evidence="5">Belongs to the tyrosinase family.</text>
</comment>
<accession>Q9MB14</accession>
<accession>Q84V52</accession>
<accession>Q9ARD3</accession>
<feature type="transit peptide" description="Chloroplast" evidence="3">
    <location>
        <begin position="1"/>
        <end position="50"/>
    </location>
</feature>
<feature type="transit peptide" description="Thylakoid" evidence="1">
    <location>
        <begin position="51"/>
        <end position="88"/>
    </location>
</feature>
<feature type="chain" id="PRO_0000035909" description="Polyphenol oxidase II, chloroplastic">
    <location>
        <begin position="89"/>
        <end position="588"/>
    </location>
</feature>
<feature type="region of interest" description="Disordered" evidence="4">
    <location>
        <begin position="1"/>
        <end position="32"/>
    </location>
</feature>
<feature type="compositionally biased region" description="Polar residues" evidence="4">
    <location>
        <begin position="1"/>
        <end position="10"/>
    </location>
</feature>
<feature type="compositionally biased region" description="Low complexity" evidence="4">
    <location>
        <begin position="16"/>
        <end position="29"/>
    </location>
</feature>
<feature type="binding site" evidence="2">
    <location>
        <position position="178"/>
    </location>
    <ligand>
        <name>Cu cation</name>
        <dbReference type="ChEBI" id="CHEBI:23378"/>
        <label>A</label>
    </ligand>
</feature>
<feature type="binding site" evidence="2">
    <location>
        <position position="199"/>
    </location>
    <ligand>
        <name>Cu cation</name>
        <dbReference type="ChEBI" id="CHEBI:23378"/>
        <label>A</label>
    </ligand>
</feature>
<feature type="binding site" evidence="2">
    <location>
        <position position="208"/>
    </location>
    <ligand>
        <name>Cu cation</name>
        <dbReference type="ChEBI" id="CHEBI:23378"/>
        <label>A</label>
    </ligand>
</feature>
<feature type="binding site" evidence="2">
    <location>
        <position position="330"/>
    </location>
    <ligand>
        <name>Cu cation</name>
        <dbReference type="ChEBI" id="CHEBI:23378"/>
        <label>B</label>
    </ligand>
</feature>
<feature type="binding site" evidence="2">
    <location>
        <position position="334"/>
    </location>
    <ligand>
        <name>Cu cation</name>
        <dbReference type="ChEBI" id="CHEBI:23378"/>
        <label>B</label>
    </ligand>
</feature>
<feature type="binding site" evidence="2">
    <location>
        <position position="366"/>
    </location>
    <ligand>
        <name>Cu cation</name>
        <dbReference type="ChEBI" id="CHEBI:23378"/>
        <label>B</label>
    </ligand>
</feature>
<feature type="disulfide bond" evidence="1">
    <location>
        <begin position="99"/>
        <end position="116"/>
    </location>
</feature>
<feature type="disulfide bond" evidence="1">
    <location>
        <begin position="115"/>
        <end position="179"/>
    </location>
</feature>
<feature type="cross-link" description="2'-(S-cysteinyl)-histidine (Cys-His)" evidence="1">
    <location>
        <begin position="182"/>
        <end position="199"/>
    </location>
</feature>
<feature type="sequence conflict" description="In Ref. 2; CAC29040." evidence="5" ref="2">
    <original>K</original>
    <variation>R</variation>
    <location>
        <position position="130"/>
    </location>
</feature>
<feature type="sequence conflict" description="In Ref. 2; CAC29040." evidence="5" ref="2">
    <original>T</original>
    <variation>N</variation>
    <location>
        <position position="277"/>
    </location>
</feature>
<feature type="sequence conflict" description="In Ref. 1; BAA92317." evidence="5" ref="1">
    <original>Q</original>
    <variation>E</variation>
    <location>
        <position position="493"/>
    </location>
</feature>
<feature type="sequence conflict" description="In Ref. 3; CAC83610." evidence="5" ref="3">
    <original>A</original>
    <variation>P</variation>
    <location>
        <position position="563"/>
    </location>
</feature>
<name>PPO2_IPOBA</name>
<keyword id="KW-0150">Chloroplast</keyword>
<keyword id="KW-0186">Copper</keyword>
<keyword id="KW-1015">Disulfide bond</keyword>
<keyword id="KW-0479">Metal-binding</keyword>
<keyword id="KW-0560">Oxidoreductase</keyword>
<keyword id="KW-0934">Plastid</keyword>
<keyword id="KW-0883">Thioether bond</keyword>
<keyword id="KW-0793">Thylakoid</keyword>
<keyword id="KW-0809">Transit peptide</keyword>
<sequence length="588" mass="65651">MASFTTSPCTSAAPKTPKSLSSSATISSPLPKPSQIHIATAKRTHHFKVSCNAPNGDSQPKLDRRDVLLGLGGLAGAASLINNPLAFAEPIHAPEISKCVVPPKDLPPDAIVDNCCPPLATNVIPYKVPKTSPSAMKIRPAIHRMDKEYIAKFEKAIRLMKELPADDPRNFYQQALVHCAYCNGGYVQTDYPDKEIQVHNSWLFFPFHRWYLYFYERILGKLIGDPTFGLPFWNWDTPAGMLIPQYFRNQNSPLYDENRNQSHLPLVMDLGYAGTDTDVTDQERISNNLALMYKSMVTNAGTAELFLGKPYKAGDDPVNKGGGSIENIPHTPVHRWVGDVKPRTQNGEDMGNFYSAGRDILFYCHHSNVDRMWTIWQQLGGKGRRRDFTDSDWLDATFIFYDENKQAVRVRVGDALDNQKLGYKYEFTNLPWLNSKPLPTKKKTGLAARSKAPFVTDVFPLTLDKVVQVKVPRPKKSRSKEEKEAEEEILEIQGIEVAIDQYAKFDVYLNDEDEPEAGKEKAEYAGSFAHLPHKHTGSKKIRTSLSLGLNEPLEDLGAEDDDAVLVTLAPKVGGGVVTVENIKIVYGS</sequence>
<organism>
    <name type="scientific">Ipomoea batatas</name>
    <name type="common">Sweet potato</name>
    <name type="synonym">Convolvulus batatas</name>
    <dbReference type="NCBI Taxonomy" id="4120"/>
    <lineage>
        <taxon>Eukaryota</taxon>
        <taxon>Viridiplantae</taxon>
        <taxon>Streptophyta</taxon>
        <taxon>Embryophyta</taxon>
        <taxon>Tracheophyta</taxon>
        <taxon>Spermatophyta</taxon>
        <taxon>Magnoliopsida</taxon>
        <taxon>eudicotyledons</taxon>
        <taxon>Gunneridae</taxon>
        <taxon>Pentapetalae</taxon>
        <taxon>asterids</taxon>
        <taxon>lamiids</taxon>
        <taxon>Solanales</taxon>
        <taxon>Convolvulaceae</taxon>
        <taxon>Ipomoeeae</taxon>
        <taxon>Ipomoea</taxon>
    </lineage>
</organism>
<protein>
    <recommendedName>
        <fullName>Polyphenol oxidase II, chloroplastic</fullName>
        <shortName>PPO-II</shortName>
        <ecNumber>1.10.3.1</ecNumber>
    </recommendedName>
    <alternativeName>
        <fullName>Catechol oxidase II</fullName>
    </alternativeName>
</protein>
<gene>
    <name type="primary">co-2</name>
    <name type="synonym">ppo-I</name>
</gene>
<proteinExistence type="evidence at transcript level"/>